<accession>D4B1S6</accession>
<protein>
    <recommendedName>
        <fullName>Probable carboxypeptidase 2</fullName>
        <ecNumber>3.4.17.-</ecNumber>
    </recommendedName>
    <alternativeName>
        <fullName>Carboxypeptidase M14B</fullName>
    </alternativeName>
    <alternativeName>
        <fullName>Carboxypeptidase MCPB</fullName>
    </alternativeName>
</protein>
<name>MCPB_ARTBC</name>
<sequence>MVAYRLLALISLGLGSHCASALQYGYNQLSTHKDSAVVAGAFPAINGTHLQSPAFTSPGTVPRGFSDGTSGPTRDETMEGFMRRLARSNSWMAYHEADFKSEEGRKFPYMYLSASNSSVENPSSHKLRVWLQGGVHGNEPAGDQSMLALLGDLAANQKWAAKLLEKMDILVLPRYNPDGVFYFQRYLATNFDPNRDHVKLARQQTRDIKELFTRFSPHIATDMHEFTAGRTFGPKKDIIYAADALFSAAKNLNIDEGIRQLSEKLFAKRMGKDIEAAGLRWDPYITQGESSSSKLLLLEAGTDAKIGRNAMGLSQCVVFLCETRGIGIADQHFERRTLSGLVMAKSILQTAVDNFDEVYNTIERGIRRFTNSRNDIVLTDKSPIMERTFGMLNITDASLFDYPIDFATTTPAEAVLTRSRPRAYLIPPSWPDIVKRLEVFGVKADKLPYSYVGPVEALNVTSVTFDKEYYEGVVTTTVQTKLVERNIRLPAGSYLVKTNQKNAALAFVALEVRTKDLLPVLIMDVY</sequence>
<proteinExistence type="evidence at protein level"/>
<feature type="signal peptide" evidence="2">
    <location>
        <begin position="1"/>
        <end position="21"/>
    </location>
</feature>
<feature type="chain" id="PRO_0000397762" description="Probable carboxypeptidase 2">
    <location>
        <begin position="22"/>
        <end position="526"/>
    </location>
</feature>
<feature type="domain" description="Peptidase M14" evidence="3">
    <location>
        <begin position="71"/>
        <end position="351"/>
    </location>
</feature>
<feature type="region of interest" description="Disordered" evidence="4">
    <location>
        <begin position="53"/>
        <end position="76"/>
    </location>
</feature>
<feature type="active site" description="Proton donor/acceptor" evidence="3">
    <location>
        <position position="322"/>
    </location>
</feature>
<feature type="binding site" evidence="3">
    <location>
        <position position="136"/>
    </location>
    <ligand>
        <name>Zn(2+)</name>
        <dbReference type="ChEBI" id="CHEBI:29105"/>
        <note>catalytic</note>
    </ligand>
</feature>
<feature type="binding site" evidence="3">
    <location>
        <position position="139"/>
    </location>
    <ligand>
        <name>Zn(2+)</name>
        <dbReference type="ChEBI" id="CHEBI:29105"/>
        <note>catalytic</note>
    </ligand>
</feature>
<feature type="binding site" evidence="3">
    <location>
        <position position="224"/>
    </location>
    <ligand>
        <name>Zn(2+)</name>
        <dbReference type="ChEBI" id="CHEBI:29105"/>
        <note>catalytic</note>
    </ligand>
</feature>
<feature type="glycosylation site" description="N-linked (GlcNAc...) asparagine" evidence="2">
    <location>
        <position position="46"/>
    </location>
</feature>
<feature type="glycosylation site" description="N-linked (GlcNAc...) asparagine" evidence="2">
    <location>
        <position position="116"/>
    </location>
</feature>
<feature type="glycosylation site" description="N-linked (GlcNAc...) asparagine" evidence="2">
    <location>
        <position position="393"/>
    </location>
</feature>
<feature type="glycosylation site" description="N-linked (GlcNAc...) asparagine" evidence="2">
    <location>
        <position position="459"/>
    </location>
</feature>
<reference key="1">
    <citation type="journal article" date="2011" name="Genome Biol.">
        <title>Comparative and functional genomics provide insights into the pathogenicity of dermatophytic fungi.</title>
        <authorList>
            <person name="Burmester A."/>
            <person name="Shelest E."/>
            <person name="Gloeckner G."/>
            <person name="Heddergott C."/>
            <person name="Schindler S."/>
            <person name="Staib P."/>
            <person name="Heidel A."/>
            <person name="Felder M."/>
            <person name="Petzold A."/>
            <person name="Szafranski K."/>
            <person name="Feuermann M."/>
            <person name="Pedruzzi I."/>
            <person name="Priebe S."/>
            <person name="Groth M."/>
            <person name="Winkler R."/>
            <person name="Li W."/>
            <person name="Kniemeyer O."/>
            <person name="Schroeckh V."/>
            <person name="Hertweck C."/>
            <person name="Hube B."/>
            <person name="White T.C."/>
            <person name="Platzer M."/>
            <person name="Guthke R."/>
            <person name="Heitman J."/>
            <person name="Woestemeyer J."/>
            <person name="Zipfel P.F."/>
            <person name="Monod M."/>
            <person name="Brakhage A.A."/>
        </authorList>
    </citation>
    <scope>NUCLEOTIDE SEQUENCE [LARGE SCALE GENOMIC DNA]</scope>
    <scope>IDENTIFICATION BY MASS SPECTROMETRY</scope>
    <scope>SUBCELLULAR LOCATION</scope>
    <source>
        <strain>ATCC MYA-4681 / CBS 112371</strain>
    </source>
</reference>
<gene>
    <name type="primary">MCPB</name>
    <name type="ORF">ARB_02407</name>
</gene>
<comment type="function">
    <text evidence="1">Extracellular metalloprotease that contributes to pathogenicity.</text>
</comment>
<comment type="cofactor">
    <cofactor evidence="3">
        <name>Zn(2+)</name>
        <dbReference type="ChEBI" id="CHEBI:29105"/>
    </cofactor>
</comment>
<comment type="subcellular location">
    <subcellularLocation>
        <location evidence="5">Secreted</location>
    </subcellularLocation>
</comment>
<comment type="similarity">
    <text evidence="6">Belongs to the peptidase M14 family.</text>
</comment>
<dbReference type="EC" id="3.4.17.-"/>
<dbReference type="EMBL" id="ABSU01000027">
    <property type="protein sequence ID" value="EFE30708.1"/>
    <property type="molecule type" value="Genomic_DNA"/>
</dbReference>
<dbReference type="RefSeq" id="XP_003011348.1">
    <property type="nucleotide sequence ID" value="XM_003011302.1"/>
</dbReference>
<dbReference type="SMR" id="D4B1S6"/>
<dbReference type="GlyCosmos" id="D4B1S6">
    <property type="glycosylation" value="4 sites, No reported glycans"/>
</dbReference>
<dbReference type="GeneID" id="9524249"/>
<dbReference type="KEGG" id="abe:ARB_02407"/>
<dbReference type="eggNOG" id="ENOG502RDMV">
    <property type="taxonomic scope" value="Eukaryota"/>
</dbReference>
<dbReference type="HOGENOM" id="CLU_026103_1_0_1"/>
<dbReference type="OMA" id="SNGADYQ"/>
<dbReference type="Proteomes" id="UP000008866">
    <property type="component" value="Unassembled WGS sequence"/>
</dbReference>
<dbReference type="GO" id="GO:0005576">
    <property type="term" value="C:extracellular region"/>
    <property type="evidence" value="ECO:0007669"/>
    <property type="project" value="UniProtKB-SubCell"/>
</dbReference>
<dbReference type="GO" id="GO:0004181">
    <property type="term" value="F:metallocarboxypeptidase activity"/>
    <property type="evidence" value="ECO:0007669"/>
    <property type="project" value="InterPro"/>
</dbReference>
<dbReference type="GO" id="GO:0008270">
    <property type="term" value="F:zinc ion binding"/>
    <property type="evidence" value="ECO:0007669"/>
    <property type="project" value="InterPro"/>
</dbReference>
<dbReference type="GO" id="GO:0006508">
    <property type="term" value="P:proteolysis"/>
    <property type="evidence" value="ECO:0007669"/>
    <property type="project" value="UniProtKB-KW"/>
</dbReference>
<dbReference type="CDD" id="cd06242">
    <property type="entry name" value="M14-like"/>
    <property type="match status" value="1"/>
</dbReference>
<dbReference type="Gene3D" id="3.40.630.10">
    <property type="entry name" value="Zn peptidases"/>
    <property type="match status" value="1"/>
</dbReference>
<dbReference type="InterPro" id="IPR000834">
    <property type="entry name" value="Peptidase_M14"/>
</dbReference>
<dbReference type="PANTHER" id="PTHR11705:SF83">
    <property type="entry name" value="INACTIVE METALLOCARBOXYPEPTIDASE ECM14"/>
    <property type="match status" value="1"/>
</dbReference>
<dbReference type="PANTHER" id="PTHR11705">
    <property type="entry name" value="PROTEASE FAMILY M14 CARBOXYPEPTIDASE A,B"/>
    <property type="match status" value="1"/>
</dbReference>
<dbReference type="Pfam" id="PF00246">
    <property type="entry name" value="Peptidase_M14"/>
    <property type="match status" value="1"/>
</dbReference>
<dbReference type="SUPFAM" id="SSF53187">
    <property type="entry name" value="Zn-dependent exopeptidases"/>
    <property type="match status" value="1"/>
</dbReference>
<dbReference type="PROSITE" id="PS52035">
    <property type="entry name" value="PEPTIDASE_M14"/>
    <property type="match status" value="1"/>
</dbReference>
<keyword id="KW-0121">Carboxypeptidase</keyword>
<keyword id="KW-0325">Glycoprotein</keyword>
<keyword id="KW-0378">Hydrolase</keyword>
<keyword id="KW-0645">Protease</keyword>
<keyword id="KW-1185">Reference proteome</keyword>
<keyword id="KW-0964">Secreted</keyword>
<keyword id="KW-0732">Signal</keyword>
<keyword id="KW-0843">Virulence</keyword>
<organism>
    <name type="scientific">Arthroderma benhamiae (strain ATCC MYA-4681 / CBS 112371)</name>
    <name type="common">Trichophyton mentagrophytes</name>
    <dbReference type="NCBI Taxonomy" id="663331"/>
    <lineage>
        <taxon>Eukaryota</taxon>
        <taxon>Fungi</taxon>
        <taxon>Dikarya</taxon>
        <taxon>Ascomycota</taxon>
        <taxon>Pezizomycotina</taxon>
        <taxon>Eurotiomycetes</taxon>
        <taxon>Eurotiomycetidae</taxon>
        <taxon>Onygenales</taxon>
        <taxon>Arthrodermataceae</taxon>
        <taxon>Trichophyton</taxon>
    </lineage>
</organism>
<evidence type="ECO:0000250" key="1"/>
<evidence type="ECO:0000255" key="2"/>
<evidence type="ECO:0000255" key="3">
    <source>
        <dbReference type="PROSITE-ProRule" id="PRU01379"/>
    </source>
</evidence>
<evidence type="ECO:0000256" key="4">
    <source>
        <dbReference type="SAM" id="MobiDB-lite"/>
    </source>
</evidence>
<evidence type="ECO:0000269" key="5">
    <source>
    </source>
</evidence>
<evidence type="ECO:0000305" key="6"/>